<accession>Q9BDI7</accession>
<name>MX2_BOVIN</name>
<dbReference type="EMBL" id="AF355147">
    <property type="protein sequence ID" value="AAK25824.1"/>
    <property type="molecule type" value="mRNA"/>
</dbReference>
<dbReference type="RefSeq" id="NP_776366.1">
    <property type="nucleotide sequence ID" value="NM_173941.2"/>
</dbReference>
<dbReference type="SMR" id="Q9BDI7"/>
<dbReference type="FunCoup" id="Q9BDI7">
    <property type="interactions" value="82"/>
</dbReference>
<dbReference type="STRING" id="9913.ENSBTAP00000011146"/>
<dbReference type="PaxDb" id="9913-ENSBTAP00000011146"/>
<dbReference type="GeneID" id="280873"/>
<dbReference type="KEGG" id="bta:280873"/>
<dbReference type="CTD" id="4600"/>
<dbReference type="eggNOG" id="KOG0446">
    <property type="taxonomic scope" value="Eukaryota"/>
</dbReference>
<dbReference type="InParanoid" id="Q9BDI7"/>
<dbReference type="OrthoDB" id="5061070at2759"/>
<dbReference type="Proteomes" id="UP000009136">
    <property type="component" value="Unplaced"/>
</dbReference>
<dbReference type="GO" id="GO:0005737">
    <property type="term" value="C:cytoplasm"/>
    <property type="evidence" value="ECO:0000318"/>
    <property type="project" value="GO_Central"/>
</dbReference>
<dbReference type="GO" id="GO:0005874">
    <property type="term" value="C:microtubule"/>
    <property type="evidence" value="ECO:0000318"/>
    <property type="project" value="GO_Central"/>
</dbReference>
<dbReference type="GO" id="GO:0005634">
    <property type="term" value="C:nucleus"/>
    <property type="evidence" value="ECO:0000318"/>
    <property type="project" value="GO_Central"/>
</dbReference>
<dbReference type="GO" id="GO:0005886">
    <property type="term" value="C:plasma membrane"/>
    <property type="evidence" value="ECO:0000318"/>
    <property type="project" value="GO_Central"/>
</dbReference>
<dbReference type="GO" id="GO:0098793">
    <property type="term" value="C:presynapse"/>
    <property type="evidence" value="ECO:0007669"/>
    <property type="project" value="GOC"/>
</dbReference>
<dbReference type="GO" id="GO:0045202">
    <property type="term" value="C:synapse"/>
    <property type="evidence" value="ECO:0000318"/>
    <property type="project" value="GO_Central"/>
</dbReference>
<dbReference type="GO" id="GO:0005525">
    <property type="term" value="F:GTP binding"/>
    <property type="evidence" value="ECO:0007669"/>
    <property type="project" value="UniProtKB-KW"/>
</dbReference>
<dbReference type="GO" id="GO:0003924">
    <property type="term" value="F:GTPase activity"/>
    <property type="evidence" value="ECO:0000318"/>
    <property type="project" value="GO_Central"/>
</dbReference>
<dbReference type="GO" id="GO:0008017">
    <property type="term" value="F:microtubule binding"/>
    <property type="evidence" value="ECO:0000318"/>
    <property type="project" value="GO_Central"/>
</dbReference>
<dbReference type="GO" id="GO:0051607">
    <property type="term" value="P:defense response to virus"/>
    <property type="evidence" value="ECO:0000318"/>
    <property type="project" value="GO_Central"/>
</dbReference>
<dbReference type="GO" id="GO:0045087">
    <property type="term" value="P:innate immune response"/>
    <property type="evidence" value="ECO:0007669"/>
    <property type="project" value="UniProtKB-KW"/>
</dbReference>
<dbReference type="GO" id="GO:0031623">
    <property type="term" value="P:receptor internalization"/>
    <property type="evidence" value="ECO:0000318"/>
    <property type="project" value="GO_Central"/>
</dbReference>
<dbReference type="GO" id="GO:0009615">
    <property type="term" value="P:response to virus"/>
    <property type="evidence" value="ECO:0000314"/>
    <property type="project" value="UniProtKB"/>
</dbReference>
<dbReference type="GO" id="GO:0016185">
    <property type="term" value="P:synaptic vesicle budding from presynaptic endocytic zone membrane"/>
    <property type="evidence" value="ECO:0000318"/>
    <property type="project" value="GO_Central"/>
</dbReference>
<dbReference type="CDD" id="cd08771">
    <property type="entry name" value="DLP_1"/>
    <property type="match status" value="1"/>
</dbReference>
<dbReference type="FunFam" id="1.20.120.1240:FF:000007">
    <property type="entry name" value="Interferon-induced GTP-binding protein Mx1"/>
    <property type="match status" value="1"/>
</dbReference>
<dbReference type="FunFam" id="3.40.50.300:FF:000621">
    <property type="entry name" value="Interferon-induced GTP-binding protein Mx1"/>
    <property type="match status" value="1"/>
</dbReference>
<dbReference type="Gene3D" id="1.20.120.1240">
    <property type="entry name" value="Dynamin, middle domain"/>
    <property type="match status" value="1"/>
</dbReference>
<dbReference type="Gene3D" id="3.40.50.300">
    <property type="entry name" value="P-loop containing nucleotide triphosphate hydrolases"/>
    <property type="match status" value="1"/>
</dbReference>
<dbReference type="InterPro" id="IPR022812">
    <property type="entry name" value="Dynamin"/>
</dbReference>
<dbReference type="InterPro" id="IPR001401">
    <property type="entry name" value="Dynamin_GTPase"/>
</dbReference>
<dbReference type="InterPro" id="IPR019762">
    <property type="entry name" value="Dynamin_GTPase_CS"/>
</dbReference>
<dbReference type="InterPro" id="IPR045063">
    <property type="entry name" value="Dynamin_N"/>
</dbReference>
<dbReference type="InterPro" id="IPR000375">
    <property type="entry name" value="Dynamin_stalk"/>
</dbReference>
<dbReference type="InterPro" id="IPR030381">
    <property type="entry name" value="G_DYNAMIN_dom"/>
</dbReference>
<dbReference type="InterPro" id="IPR003130">
    <property type="entry name" value="GED"/>
</dbReference>
<dbReference type="InterPro" id="IPR020850">
    <property type="entry name" value="GED_dom"/>
</dbReference>
<dbReference type="InterPro" id="IPR027417">
    <property type="entry name" value="P-loop_NTPase"/>
</dbReference>
<dbReference type="PANTHER" id="PTHR11566">
    <property type="entry name" value="DYNAMIN"/>
    <property type="match status" value="1"/>
</dbReference>
<dbReference type="PANTHER" id="PTHR11566:SF46">
    <property type="entry name" value="INTERFERON-INDUCED GTP-BINDING PROTEIN MX2"/>
    <property type="match status" value="1"/>
</dbReference>
<dbReference type="Pfam" id="PF01031">
    <property type="entry name" value="Dynamin_M"/>
    <property type="match status" value="1"/>
</dbReference>
<dbReference type="Pfam" id="PF00350">
    <property type="entry name" value="Dynamin_N"/>
    <property type="match status" value="1"/>
</dbReference>
<dbReference type="Pfam" id="PF02212">
    <property type="entry name" value="GED"/>
    <property type="match status" value="1"/>
</dbReference>
<dbReference type="PRINTS" id="PR00195">
    <property type="entry name" value="DYNAMIN"/>
</dbReference>
<dbReference type="SMART" id="SM00053">
    <property type="entry name" value="DYNc"/>
    <property type="match status" value="1"/>
</dbReference>
<dbReference type="SMART" id="SM00302">
    <property type="entry name" value="GED"/>
    <property type="match status" value="1"/>
</dbReference>
<dbReference type="SUPFAM" id="SSF52540">
    <property type="entry name" value="P-loop containing nucleoside triphosphate hydrolases"/>
    <property type="match status" value="1"/>
</dbReference>
<dbReference type="PROSITE" id="PS00410">
    <property type="entry name" value="G_DYNAMIN_1"/>
    <property type="match status" value="1"/>
</dbReference>
<dbReference type="PROSITE" id="PS51718">
    <property type="entry name" value="G_DYNAMIN_2"/>
    <property type="match status" value="1"/>
</dbReference>
<dbReference type="PROSITE" id="PS51388">
    <property type="entry name" value="GED"/>
    <property type="match status" value="1"/>
</dbReference>
<keyword id="KW-0051">Antiviral defense</keyword>
<keyword id="KW-0963">Cytoplasm</keyword>
<keyword id="KW-0342">GTP-binding</keyword>
<keyword id="KW-0391">Immunity</keyword>
<keyword id="KW-0399">Innate immunity</keyword>
<keyword id="KW-0547">Nucleotide-binding</keyword>
<keyword id="KW-0539">Nucleus</keyword>
<keyword id="KW-1185">Reference proteome</keyword>
<comment type="function">
    <text evidence="6">Interferon-induced dynamin-like GTPase with antiviral activity against vesicular stomatitis virus (VSV).</text>
</comment>
<comment type="subcellular location">
    <subcellularLocation>
        <location evidence="1">Cytoplasm</location>
    </subcellularLocation>
    <subcellularLocation>
        <location evidence="1">Nucleus</location>
    </subcellularLocation>
</comment>
<comment type="induction">
    <text evidence="7">By type I and type III interferons.</text>
</comment>
<comment type="similarity">
    <text evidence="4">Belongs to the TRAFAC class dynamin-like GTPase superfamily. Dynamin/Fzo/YdjA family.</text>
</comment>
<sequence>MSMSFRPLKYKRHTQTSTQHHPKQDIYFHQQPPGPPLGQTMSPPQWQVEESNPDFLPNNFNQLNLDPQQPEAKGGQQMSKGPENNLYRKYEEKVRPCIDLIDSLRALGVEQDLALPAIAVIGDQSSGKSSVLEALSGVALPRGSGIITRCPLVLKLTKRECEWTGKITYRNITQQLQNPSEVEWEIRRAQNIIAGNGLGISHELINLEITSPEVPDLTLIDLPGITRVAVENQPQDIGLQIKALIKKYIQRQETINLVVVPCNVDIATTEALSMAQEVDPDGDRTIGILTKPDLVDKGTEKGVLKVMQNLTYHLKKGYMIVKCRGQQDITNKLSLAEATRKETMFFETHPYFRILLDEGKATVPLLAERLTTELIWHINKSLPLLENQIKEKHQRATEELQQYGDDIPSDEGDKMFFLIEKIKVFNEDIGKLIEGEEIVMETESRLCNKIREEFTSWILILTTNIEKVKSILNEEVSKYEKKYRGKELLGFVNYKTFETVVKHYLGQLIDPALKMLQKAMEIVWQTFKDTAKKHFAEFCNLHQTVQNKIEDIKTKQMAEAANLIQLQFRMEKLVFCQDQIYGVVLNKVREDIFNSMGKASETPQSKQPFLNDQSSISSIVEIGVHLNAYFMETSKRLANQIPFIIQYFMLQENGDKVQKAMMQLLQDTQHYSWLLQEQSDTATKRKFLKEKIFRLTQAQQALYEFPHFKG</sequence>
<protein>
    <recommendedName>
        <fullName>Interferon-induced GTP-binding protein Mx2</fullName>
    </recommendedName>
    <alternativeName>
        <fullName>Myxovirus resistance protein 2</fullName>
    </alternativeName>
</protein>
<organism>
    <name type="scientific">Bos taurus</name>
    <name type="common">Bovine</name>
    <dbReference type="NCBI Taxonomy" id="9913"/>
    <lineage>
        <taxon>Eukaryota</taxon>
        <taxon>Metazoa</taxon>
        <taxon>Chordata</taxon>
        <taxon>Craniata</taxon>
        <taxon>Vertebrata</taxon>
        <taxon>Euteleostomi</taxon>
        <taxon>Mammalia</taxon>
        <taxon>Eutheria</taxon>
        <taxon>Laurasiatheria</taxon>
        <taxon>Artiodactyla</taxon>
        <taxon>Ruminantia</taxon>
        <taxon>Pecora</taxon>
        <taxon>Bovidae</taxon>
        <taxon>Bovinae</taxon>
        <taxon>Bos</taxon>
    </lineage>
</organism>
<gene>
    <name type="primary">MX2</name>
</gene>
<proteinExistence type="evidence at transcript level"/>
<feature type="chain" id="PRO_0000319957" description="Interferon-induced GTP-binding protein Mx2">
    <location>
        <begin position="1"/>
        <end position="710"/>
    </location>
</feature>
<feature type="domain" description="Dynamin-type G" evidence="4">
    <location>
        <begin position="112"/>
        <end position="383"/>
    </location>
</feature>
<feature type="domain" description="GED" evidence="3">
    <location>
        <begin position="619"/>
        <end position="710"/>
    </location>
</feature>
<feature type="region of interest" description="Disordered" evidence="5">
    <location>
        <begin position="1"/>
        <end position="51"/>
    </location>
</feature>
<feature type="region of interest" description="G1 motif" evidence="4">
    <location>
        <begin position="122"/>
        <end position="129"/>
    </location>
</feature>
<feature type="region of interest" description="G2 motif" evidence="4">
    <location>
        <begin position="147"/>
        <end position="149"/>
    </location>
</feature>
<feature type="region of interest" description="G3 motif" evidence="4">
    <location>
        <begin position="221"/>
        <end position="224"/>
    </location>
</feature>
<feature type="region of interest" description="G4 motif" evidence="4">
    <location>
        <begin position="290"/>
        <end position="293"/>
    </location>
</feature>
<feature type="region of interest" description="G5 motif" evidence="4">
    <location>
        <begin position="322"/>
        <end position="325"/>
    </location>
</feature>
<feature type="compositionally biased region" description="Polar residues" evidence="5">
    <location>
        <begin position="39"/>
        <end position="50"/>
    </location>
</feature>
<feature type="binding site" evidence="2">
    <location>
        <begin position="122"/>
        <end position="129"/>
    </location>
    <ligand>
        <name>GTP</name>
        <dbReference type="ChEBI" id="CHEBI:37565"/>
    </ligand>
</feature>
<feature type="binding site" evidence="2">
    <location>
        <begin position="221"/>
        <end position="225"/>
    </location>
    <ligand>
        <name>GTP</name>
        <dbReference type="ChEBI" id="CHEBI:37565"/>
    </ligand>
</feature>
<feature type="binding site" evidence="2">
    <location>
        <begin position="290"/>
        <end position="293"/>
    </location>
    <ligand>
        <name>GTP</name>
        <dbReference type="ChEBI" id="CHEBI:37565"/>
    </ligand>
</feature>
<feature type="sequence variant" evidence="6">
    <original>G</original>
    <variation>S</variation>
    <location>
        <position position="302"/>
    </location>
</feature>
<feature type="sequence variant" evidence="6">
    <original>I</original>
    <variation>V</variation>
    <location>
        <position position="354"/>
    </location>
</feature>
<reference key="1">
    <citation type="submission" date="2001-02" db="EMBL/GenBank/DDBJ databases">
        <title>Bos taurus GTP-binding protein (Mx2) mRNA sequence.</title>
        <authorList>
            <person name="Gordy P.W."/>
            <person name="Bowen R.A."/>
        </authorList>
    </citation>
    <scope>NUCLEOTIDE SEQUENCE [MRNA]</scope>
    <source>
        <tissue>Endometrium</tissue>
    </source>
</reference>
<reference key="2">
    <citation type="journal article" date="2007" name="Immunogenetics">
        <title>Bovine and water buffalo Mx2 genes: polymorphism and antiviral activity.</title>
        <authorList>
            <person name="Babiker H.A.E."/>
            <person name="Nakatsu Y."/>
            <person name="Yamada K."/>
            <person name="Yoneda A."/>
            <person name="Takada A."/>
            <person name="Ueda J."/>
            <person name="Hata H."/>
            <person name="Watanabe T."/>
        </authorList>
    </citation>
    <scope>FUNCTION</scope>
    <scope>VARIANTS SER-302 AND VAL-354</scope>
</reference>
<reference key="3">
    <citation type="journal article" date="2007" name="Microbes Infect.">
        <title>The Mx GTPase family of interferon-induced antiviral proteins.</title>
        <authorList>
            <person name="Haller O."/>
            <person name="Stertz S."/>
            <person name="Kochs G."/>
        </authorList>
    </citation>
    <scope>REVIEW</scope>
    <scope>INDUCTION</scope>
</reference>
<evidence type="ECO:0000250" key="1"/>
<evidence type="ECO:0000255" key="2"/>
<evidence type="ECO:0000255" key="3">
    <source>
        <dbReference type="PROSITE-ProRule" id="PRU00720"/>
    </source>
</evidence>
<evidence type="ECO:0000255" key="4">
    <source>
        <dbReference type="PROSITE-ProRule" id="PRU01055"/>
    </source>
</evidence>
<evidence type="ECO:0000256" key="5">
    <source>
        <dbReference type="SAM" id="MobiDB-lite"/>
    </source>
</evidence>
<evidence type="ECO:0000269" key="6">
    <source>
    </source>
</evidence>
<evidence type="ECO:0000269" key="7">
    <source>
    </source>
</evidence>